<proteinExistence type="inferred from homology"/>
<protein>
    <recommendedName>
        <fullName>B1 bradykinin receptor</fullName>
        <shortName>B1R</shortName>
        <shortName>BK-1 receptor</shortName>
    </recommendedName>
</protein>
<sequence>MASWPPLELQSSNQSQLFPQNATACDNAPEAWDLLHRVLPTFIISICSFGLLGNLFVLLVFLLPRRRLNVAEIYLANLAASDLVFVLGLPFWAENIWNQFNWPFGALLCRVINGIIKANLFISIFLVVAISQDRYCVLVHPMASRRRQRRRQARVTCVLIWVVGGLLSIPTFLLRSIQAVPDLNITACILLLPHEAWHFARIVELNILAFLLPLAAIIFFNYHILASLRGREEVSRTRCGGSKDSKTTALILTLVVAFLVCWAPYHFFAFLEFLFQVQAVRGCFWEDFIDLGLQLANFLAFTNSSLNPVIYVFVGRLFRTKVWELYKQCTPKSLAPISSSHRKEIFQLFWRN</sequence>
<feature type="chain" id="PRO_0000069183" description="B1 bradykinin receptor">
    <location>
        <begin position="1"/>
        <end position="352"/>
    </location>
</feature>
<feature type="topological domain" description="Extracellular" evidence="2">
    <location>
        <begin position="1"/>
        <end position="41"/>
    </location>
</feature>
<feature type="transmembrane region" description="Helical; Name=1" evidence="2">
    <location>
        <begin position="42"/>
        <end position="62"/>
    </location>
</feature>
<feature type="topological domain" description="Cytoplasmic" evidence="2">
    <location>
        <begin position="63"/>
        <end position="72"/>
    </location>
</feature>
<feature type="transmembrane region" description="Helical; Name=2" evidence="2">
    <location>
        <begin position="73"/>
        <end position="93"/>
    </location>
</feature>
<feature type="topological domain" description="Extracellular" evidence="2">
    <location>
        <begin position="94"/>
        <end position="110"/>
    </location>
</feature>
<feature type="transmembrane region" description="Helical; Name=3" evidence="2">
    <location>
        <begin position="111"/>
        <end position="131"/>
    </location>
</feature>
<feature type="topological domain" description="Cytoplasmic" evidence="2">
    <location>
        <begin position="132"/>
        <end position="153"/>
    </location>
</feature>
<feature type="transmembrane region" description="Helical; Name=4" evidence="2">
    <location>
        <begin position="154"/>
        <end position="174"/>
    </location>
</feature>
<feature type="topological domain" description="Extracellular" evidence="2">
    <location>
        <begin position="175"/>
        <end position="206"/>
    </location>
</feature>
<feature type="transmembrane region" description="Helical; Name=5" evidence="2">
    <location>
        <begin position="207"/>
        <end position="227"/>
    </location>
</feature>
<feature type="topological domain" description="Cytoplasmic" evidence="2">
    <location>
        <begin position="228"/>
        <end position="250"/>
    </location>
</feature>
<feature type="transmembrane region" description="Helical; Name=6" evidence="2">
    <location>
        <begin position="251"/>
        <end position="271"/>
    </location>
</feature>
<feature type="topological domain" description="Extracellular" evidence="2">
    <location>
        <begin position="272"/>
        <end position="294"/>
    </location>
</feature>
<feature type="transmembrane region" description="Helical; Name=7" evidence="2">
    <location>
        <begin position="295"/>
        <end position="315"/>
    </location>
</feature>
<feature type="topological domain" description="Cytoplasmic" evidence="2">
    <location>
        <begin position="316"/>
        <end position="352"/>
    </location>
</feature>
<feature type="lipid moiety-binding region" description="S-palmitoyl cysteine" evidence="2">
    <location>
        <position position="329"/>
    </location>
</feature>
<feature type="glycosylation site" description="N-linked (GlcNAc...) asparagine" evidence="2">
    <location>
        <position position="13"/>
    </location>
</feature>
<feature type="glycosylation site" description="N-linked (GlcNAc...) asparagine" evidence="2">
    <location>
        <position position="21"/>
    </location>
</feature>
<feature type="glycosylation site" description="N-linked (GlcNAc...) asparagine" evidence="2">
    <location>
        <position position="184"/>
    </location>
</feature>
<feature type="disulfide bond" evidence="3">
    <location>
        <begin position="109"/>
        <end position="188"/>
    </location>
</feature>
<feature type="sequence conflict" description="In Ref. 2; AAK95386." evidence="4" ref="2">
    <original>E</original>
    <variation>Q</variation>
    <location>
        <position position="8"/>
    </location>
</feature>
<feature type="sequence conflict" description="In Ref. 2; AAK95386." evidence="4" ref="2">
    <original>V</original>
    <variation>A</variation>
    <location>
        <position position="314"/>
    </location>
</feature>
<comment type="function">
    <text evidence="1">This is a receptor for bradykinin. Could be a factor in chronic pain and inflammation.</text>
</comment>
<comment type="subcellular location">
    <subcellularLocation>
        <location evidence="1">Cell membrane</location>
        <topology evidence="2">Multi-pass membrane protein</topology>
    </subcellularLocation>
</comment>
<comment type="similarity">
    <text evidence="3">Belongs to the G-protein coupled receptor 1 family. Bradykinin receptor subfamily. BDKRB1 sub-subfamily.</text>
</comment>
<gene>
    <name type="primary">BDKRB1</name>
</gene>
<keyword id="KW-1003">Cell membrane</keyword>
<keyword id="KW-1015">Disulfide bond</keyword>
<keyword id="KW-0297">G-protein coupled receptor</keyword>
<keyword id="KW-0325">Glycoprotein</keyword>
<keyword id="KW-0449">Lipoprotein</keyword>
<keyword id="KW-0472">Membrane</keyword>
<keyword id="KW-0564">Palmitate</keyword>
<keyword id="KW-0675">Receptor</keyword>
<keyword id="KW-1185">Reference proteome</keyword>
<keyword id="KW-0807">Transducer</keyword>
<keyword id="KW-0812">Transmembrane</keyword>
<keyword id="KW-1133">Transmembrane helix</keyword>
<evidence type="ECO:0000250" key="1">
    <source>
        <dbReference type="UniProtKB" id="P46663"/>
    </source>
</evidence>
<evidence type="ECO:0000255" key="2"/>
<evidence type="ECO:0000255" key="3">
    <source>
        <dbReference type="PROSITE-ProRule" id="PRU00521"/>
    </source>
</evidence>
<evidence type="ECO:0000305" key="4"/>
<dbReference type="EMBL" id="AF540785">
    <property type="protein sequence ID" value="AAN16464.1"/>
    <property type="molecule type" value="Genomic_DNA"/>
</dbReference>
<dbReference type="EMBL" id="AY045568">
    <property type="protein sequence ID" value="AAK95386.1"/>
    <property type="molecule type" value="Genomic_DNA"/>
</dbReference>
<dbReference type="RefSeq" id="XP_014999945.1">
    <property type="nucleotide sequence ID" value="XM_015144459.1"/>
</dbReference>
<dbReference type="SMR" id="Q8HZP2"/>
<dbReference type="FunCoup" id="Q8HZP2">
    <property type="interactions" value="960"/>
</dbReference>
<dbReference type="BindingDB" id="Q8HZP2"/>
<dbReference type="ChEMBL" id="CHEMBL1250405"/>
<dbReference type="GlyCosmos" id="Q8HZP2">
    <property type="glycosylation" value="3 sites, No reported glycans"/>
</dbReference>
<dbReference type="GeneID" id="712251"/>
<dbReference type="KEGG" id="mcc:712251"/>
<dbReference type="CTD" id="623"/>
<dbReference type="eggNOG" id="KOG3656">
    <property type="taxonomic scope" value="Eukaryota"/>
</dbReference>
<dbReference type="InParanoid" id="Q8HZP2"/>
<dbReference type="OrthoDB" id="6076970at2759"/>
<dbReference type="Proteomes" id="UP000006718">
    <property type="component" value="Unassembled WGS sequence"/>
</dbReference>
<dbReference type="GO" id="GO:0005886">
    <property type="term" value="C:plasma membrane"/>
    <property type="evidence" value="ECO:0000318"/>
    <property type="project" value="GO_Central"/>
</dbReference>
<dbReference type="GO" id="GO:0004947">
    <property type="term" value="F:bradykinin receptor activity"/>
    <property type="evidence" value="ECO:0000318"/>
    <property type="project" value="GO_Central"/>
</dbReference>
<dbReference type="GO" id="GO:0007186">
    <property type="term" value="P:G protein-coupled receptor signaling pathway"/>
    <property type="evidence" value="ECO:0000318"/>
    <property type="project" value="GO_Central"/>
</dbReference>
<dbReference type="GO" id="GO:0006954">
    <property type="term" value="P:inflammatory response"/>
    <property type="evidence" value="ECO:0007669"/>
    <property type="project" value="InterPro"/>
</dbReference>
<dbReference type="GO" id="GO:0009612">
    <property type="term" value="P:response to mechanical stimulus"/>
    <property type="evidence" value="ECO:0007669"/>
    <property type="project" value="InterPro"/>
</dbReference>
<dbReference type="FunFam" id="1.20.1070.10:FF:000295">
    <property type="entry name" value="B1 bradykinin receptor"/>
    <property type="match status" value="1"/>
</dbReference>
<dbReference type="Gene3D" id="1.20.1070.10">
    <property type="entry name" value="Rhodopsin 7-helix transmembrane proteins"/>
    <property type="match status" value="1"/>
</dbReference>
<dbReference type="InterPro" id="IPR001186">
    <property type="entry name" value="Brdyknn_1_rcpt"/>
</dbReference>
<dbReference type="InterPro" id="IPR000496">
    <property type="entry name" value="Brdyknn_rcpt"/>
</dbReference>
<dbReference type="InterPro" id="IPR050119">
    <property type="entry name" value="CCR1-9-like"/>
</dbReference>
<dbReference type="InterPro" id="IPR000276">
    <property type="entry name" value="GPCR_Rhodpsn"/>
</dbReference>
<dbReference type="InterPro" id="IPR017452">
    <property type="entry name" value="GPCR_Rhodpsn_7TM"/>
</dbReference>
<dbReference type="PANTHER" id="PTHR10489:SF957">
    <property type="entry name" value="B2 BRADYKININ RECEPTOR"/>
    <property type="match status" value="1"/>
</dbReference>
<dbReference type="PANTHER" id="PTHR10489">
    <property type="entry name" value="CELL ADHESION MOLECULE"/>
    <property type="match status" value="1"/>
</dbReference>
<dbReference type="Pfam" id="PF00001">
    <property type="entry name" value="7tm_1"/>
    <property type="match status" value="1"/>
</dbReference>
<dbReference type="PRINTS" id="PR00425">
    <property type="entry name" value="BRADYKININR"/>
</dbReference>
<dbReference type="PRINTS" id="PR00993">
    <property type="entry name" value="BRADYKINNB1R"/>
</dbReference>
<dbReference type="PRINTS" id="PR00237">
    <property type="entry name" value="GPCRRHODOPSN"/>
</dbReference>
<dbReference type="SUPFAM" id="SSF81321">
    <property type="entry name" value="Family A G protein-coupled receptor-like"/>
    <property type="match status" value="1"/>
</dbReference>
<dbReference type="PROSITE" id="PS50262">
    <property type="entry name" value="G_PROTEIN_RECEP_F1_2"/>
    <property type="match status" value="1"/>
</dbReference>
<organism>
    <name type="scientific">Macaca mulatta</name>
    <name type="common">Rhesus macaque</name>
    <dbReference type="NCBI Taxonomy" id="9544"/>
    <lineage>
        <taxon>Eukaryota</taxon>
        <taxon>Metazoa</taxon>
        <taxon>Chordata</taxon>
        <taxon>Craniata</taxon>
        <taxon>Vertebrata</taxon>
        <taxon>Euteleostomi</taxon>
        <taxon>Mammalia</taxon>
        <taxon>Eutheria</taxon>
        <taxon>Euarchontoglires</taxon>
        <taxon>Primates</taxon>
        <taxon>Haplorrhini</taxon>
        <taxon>Catarrhini</taxon>
        <taxon>Cercopithecidae</taxon>
        <taxon>Cercopithecinae</taxon>
        <taxon>Macaca</taxon>
    </lineage>
</organism>
<accession>Q8HZP2</accession>
<accession>Q95L02</accession>
<name>BKRB1_MACMU</name>
<reference key="1">
    <citation type="submission" date="2002-08" db="EMBL/GenBank/DDBJ databases">
        <title>Orthologs of human receptors and methods of use.</title>
        <authorList>
            <person name="Horlick R.A."/>
            <person name="Zhao J."/>
            <person name="Swanson R.N."/>
            <person name="Webb M.L."/>
            <person name="Strohl B."/>
            <person name="Baldwin J.J."/>
            <person name="Auld D.S."/>
        </authorList>
    </citation>
    <scope>NUCLEOTIDE SEQUENCE [GENOMIC DNA]</scope>
</reference>
<reference key="2">
    <citation type="submission" date="2001-07" db="EMBL/GenBank/DDBJ databases">
        <title>Molecular cloning of rhesus monkey B1 bradykinin receptor.</title>
        <authorList>
            <person name="Hess F."/>
            <person name="Hey P."/>
        </authorList>
    </citation>
    <scope>NUCLEOTIDE SEQUENCE [GENOMIC DNA]</scope>
</reference>